<name>UBI1P_PETCR</name>
<organism>
    <name type="scientific">Petroselinum crispum</name>
    <name type="common">Parsley</name>
    <name type="synonym">Petroselinum hortense</name>
    <dbReference type="NCBI Taxonomy" id="4043"/>
    <lineage>
        <taxon>Eukaryota</taxon>
        <taxon>Viridiplantae</taxon>
        <taxon>Streptophyta</taxon>
        <taxon>Embryophyta</taxon>
        <taxon>Tracheophyta</taxon>
        <taxon>Spermatophyta</taxon>
        <taxon>Magnoliopsida</taxon>
        <taxon>eudicotyledons</taxon>
        <taxon>Gunneridae</taxon>
        <taxon>Pentapetalae</taxon>
        <taxon>asterids</taxon>
        <taxon>campanulids</taxon>
        <taxon>Apiales</taxon>
        <taxon>Apiaceae</taxon>
        <taxon>Apioideae</taxon>
        <taxon>apioid superclade</taxon>
        <taxon>Apieae</taxon>
        <taxon>Petroselinum</taxon>
    </lineage>
</organism>
<dbReference type="EMBL" id="X64344">
    <property type="protein sequence ID" value="CAA45621.1"/>
    <property type="molecule type" value="mRNA"/>
</dbReference>
<dbReference type="PIR" id="S30151">
    <property type="entry name" value="S30151"/>
</dbReference>
<dbReference type="SMR" id="P0CH04"/>
<dbReference type="GO" id="GO:0005737">
    <property type="term" value="C:cytoplasm"/>
    <property type="evidence" value="ECO:0007669"/>
    <property type="project" value="UniProtKB-SubCell"/>
</dbReference>
<dbReference type="GO" id="GO:0005634">
    <property type="term" value="C:nucleus"/>
    <property type="evidence" value="ECO:0007669"/>
    <property type="project" value="UniProtKB-SubCell"/>
</dbReference>
<dbReference type="GO" id="GO:0003729">
    <property type="term" value="F:mRNA binding"/>
    <property type="evidence" value="ECO:0007669"/>
    <property type="project" value="UniProtKB-ARBA"/>
</dbReference>
<dbReference type="CDD" id="cd01803">
    <property type="entry name" value="Ubl_ubiquitin"/>
    <property type="match status" value="6"/>
</dbReference>
<dbReference type="FunFam" id="3.10.20.90:FF:000016">
    <property type="entry name" value="Polyubiquitin 3"/>
    <property type="match status" value="6"/>
</dbReference>
<dbReference type="Gene3D" id="3.10.20.90">
    <property type="entry name" value="Phosphatidylinositol 3-kinase Catalytic Subunit, Chain A, domain 1"/>
    <property type="match status" value="6"/>
</dbReference>
<dbReference type="InterPro" id="IPR000626">
    <property type="entry name" value="Ubiquitin-like_dom"/>
</dbReference>
<dbReference type="InterPro" id="IPR029071">
    <property type="entry name" value="Ubiquitin-like_domsf"/>
</dbReference>
<dbReference type="InterPro" id="IPR019954">
    <property type="entry name" value="Ubiquitin_CS"/>
</dbReference>
<dbReference type="InterPro" id="IPR019956">
    <property type="entry name" value="Ubiquitin_dom"/>
</dbReference>
<dbReference type="InterPro" id="IPR050158">
    <property type="entry name" value="Ubiquitin_ubiquitin-like"/>
</dbReference>
<dbReference type="PANTHER" id="PTHR10666">
    <property type="entry name" value="UBIQUITIN"/>
    <property type="match status" value="1"/>
</dbReference>
<dbReference type="Pfam" id="PF00240">
    <property type="entry name" value="ubiquitin"/>
    <property type="match status" value="6"/>
</dbReference>
<dbReference type="PRINTS" id="PR00348">
    <property type="entry name" value="UBIQUITIN"/>
</dbReference>
<dbReference type="SMART" id="SM00213">
    <property type="entry name" value="UBQ"/>
    <property type="match status" value="6"/>
</dbReference>
<dbReference type="SUPFAM" id="SSF54236">
    <property type="entry name" value="Ubiquitin-like"/>
    <property type="match status" value="6"/>
</dbReference>
<dbReference type="PROSITE" id="PS00299">
    <property type="entry name" value="UBIQUITIN_1"/>
    <property type="match status" value="6"/>
</dbReference>
<dbReference type="PROSITE" id="PS50053">
    <property type="entry name" value="UBIQUITIN_2"/>
    <property type="match status" value="6"/>
</dbReference>
<proteinExistence type="evidence at transcript level"/>
<accession>P0CH04</accession>
<accession>O82079</accession>
<accession>P03993</accession>
<accession>P69323</accession>
<keyword id="KW-0963">Cytoplasm</keyword>
<keyword id="KW-1017">Isopeptide bond</keyword>
<keyword id="KW-0539">Nucleus</keyword>
<keyword id="KW-0677">Repeat</keyword>
<keyword id="KW-0832">Ubl conjugation</keyword>
<feature type="chain" id="PRO_0000114850" description="Ubiquitin">
    <location>
        <begin position="1"/>
        <end position="76"/>
    </location>
</feature>
<feature type="chain" id="PRO_0000396413" description="Ubiquitin">
    <location>
        <begin position="77"/>
        <end position="152"/>
    </location>
</feature>
<feature type="chain" id="PRO_0000396414" description="Ubiquitin">
    <location>
        <begin position="153"/>
        <end position="228"/>
    </location>
</feature>
<feature type="chain" id="PRO_0000396415" description="Ubiquitin">
    <location>
        <begin position="229"/>
        <end position="304"/>
    </location>
</feature>
<feature type="chain" id="PRO_0000396416" description="Ubiquitin">
    <location>
        <begin position="305"/>
        <end position="380"/>
    </location>
</feature>
<feature type="chain" id="PRO_0000396417" description="Ubiquitin">
    <location>
        <begin position="381"/>
        <end position="456"/>
    </location>
</feature>
<feature type="propeptide" id="PRO_0000396418">
    <location>
        <begin position="457"/>
        <end position="458"/>
    </location>
</feature>
<feature type="domain" description="Ubiquitin-like 1" evidence="2">
    <location>
        <begin position="1"/>
        <end position="76"/>
    </location>
</feature>
<feature type="domain" description="Ubiquitin-like 2" evidence="2">
    <location>
        <begin position="77"/>
        <end position="152"/>
    </location>
</feature>
<feature type="domain" description="Ubiquitin-like 3" evidence="2">
    <location>
        <begin position="153"/>
        <end position="228"/>
    </location>
</feature>
<feature type="domain" description="Ubiquitin-like 4" evidence="2">
    <location>
        <begin position="229"/>
        <end position="304"/>
    </location>
</feature>
<feature type="domain" description="Ubiquitin-like 5" evidence="2">
    <location>
        <begin position="305"/>
        <end position="380"/>
    </location>
</feature>
<feature type="domain" description="Ubiquitin-like 6" evidence="2">
    <location>
        <begin position="381"/>
        <end position="456"/>
    </location>
</feature>
<feature type="cross-link" description="Glycyl lysine isopeptide (Lys-Gly) (interchain with G-Cter in ubiquitin)" evidence="1">
    <location>
        <position position="48"/>
    </location>
</feature>
<feature type="cross-link" description="Glycyl lysine isopeptide (Gly-Lys) (interchain with K-? in acceptor proteins)" evidence="2">
    <location>
        <position position="76"/>
    </location>
</feature>
<comment type="function">
    <text evidence="1">Ubiquitin exists either covalently attached to another protein, or free (unanchored). When covalently bound, it is conjugated to target proteins via an isopeptide bond either as a monomer (monoubiquitin), a polymer linked via different Lys residues of the ubiquitin (polyubiquitin chains) or a linear polymer linked via the initiator Met of the ubiquitin (linear polyubiquitin chains). Polyubiquitin chains, when attached to a target protein, have different functions depending on the Lys residue of the ubiquitin that is linked: Lys-48-linked is involved in protein degradation via the proteasome. Linear polymer chains formed via attachment by the initiator Met lead to cell signaling. Ubiquitin is usually conjugated to Lys residues of target proteins, however, in rare cases, conjugation to Cys or Ser residues has been observed. When polyubiquitin is free (unanchored-polyubiquitin), it also has distinct roles, such as in activation of protein kinases, and in signaling (By similarity).</text>
</comment>
<comment type="subcellular location">
    <subcellularLocation>
        <location evidence="1">Cytoplasm</location>
    </subcellularLocation>
    <subcellularLocation>
        <location evidence="1">Nucleus</location>
    </subcellularLocation>
</comment>
<comment type="miscellaneous">
    <text>For the sake of clarity sequence features are annotated only for the first chain, and are not repeated for each of the following chains.</text>
</comment>
<comment type="similarity">
    <text evidence="3">Belongs to the ubiquitin family.</text>
</comment>
<gene>
    <name type="primary">PCUBI4-1</name>
</gene>
<protein>
    <recommendedName>
        <fullName>Polyubiquitin</fullName>
    </recommendedName>
    <component>
        <recommendedName>
            <fullName>Ubiquitin</fullName>
        </recommendedName>
    </component>
</protein>
<evidence type="ECO:0000250" key="1"/>
<evidence type="ECO:0000255" key="2">
    <source>
        <dbReference type="PROSITE-ProRule" id="PRU00214"/>
    </source>
</evidence>
<evidence type="ECO:0000305" key="3"/>
<sequence>MQIFVKTLTGKTITLEVESSDTIDNVKAKIQDKEGIPPDQQRLIFAGKQLEDGRTLADYNIQKESTLHLVLRLRGGMQIFVKTLTGKTITLEVESSDTIDNVKAKIQDKEGIPPDQQRLIFAGKQLEDGRTLADYNIQKESTLHLVLRLRGGMQIFVKTLTGKTITLEVESSDTIDNVKAKIQDKEGIPPDQQRLIFAGKQLEDGRTLADYNIQKESTLHLVLRLRGGMQIFVKTLTGKTITLEVESSDTIDNVKAKIQDKEGIPPDQQRLIFAGKQLEDGRTLADYNIQKESTLHLVLRLRGGMQIFVKTLTGKTITLEVESSDTIDNVKAKIQDKEGIPPDQQRLIFAGKQLEDGRTLADYNIQKESTLHLVLRLRGGMQIFVKTLTGKTITLEVESSDTIDNVKAKIQDKEGIPPDQQRLIFAGKQLEDGRTLADYNIQKESTLHLVLRLRGGDF</sequence>
<reference key="1">
    <citation type="journal article" date="1993" name="Plant Mol. Biol.">
        <title>Polyubiquitin gene expression and structural properties of the ubi4-2 gene in Petroselinum crispum.</title>
        <authorList>
            <person name="Kawalleck P."/>
            <person name="Somssich I.E."/>
            <person name="Hahlbrock K."/>
            <person name="Feldbruegge M."/>
            <person name="Weisshaar B."/>
        </authorList>
    </citation>
    <scope>NUCLEOTIDE SEQUENCE [GENOMIC DNA / MRNA]</scope>
</reference>